<proteinExistence type="evidence at transcript level"/>
<dbReference type="EMBL" id="M85304">
    <property type="protein sequence ID" value="AAA29932.1"/>
    <property type="molecule type" value="mRNA"/>
</dbReference>
<dbReference type="PIR" id="S27843">
    <property type="entry name" value="S27843"/>
</dbReference>
<dbReference type="SMR" id="Q26604"/>
<dbReference type="eggNOG" id="KOG0488">
    <property type="taxonomic scope" value="Eukaryota"/>
</dbReference>
<dbReference type="HOGENOM" id="CLU_2200184_0_0_1"/>
<dbReference type="InParanoid" id="Q26604"/>
<dbReference type="Proteomes" id="UP000008854">
    <property type="component" value="Unassembled WGS sequence"/>
</dbReference>
<dbReference type="GO" id="GO:0005634">
    <property type="term" value="C:nucleus"/>
    <property type="evidence" value="ECO:0007669"/>
    <property type="project" value="UniProtKB-SubCell"/>
</dbReference>
<dbReference type="GO" id="GO:0003677">
    <property type="term" value="F:DNA binding"/>
    <property type="evidence" value="ECO:0007669"/>
    <property type="project" value="UniProtKB-KW"/>
</dbReference>
<dbReference type="GO" id="GO:0000981">
    <property type="term" value="F:DNA-binding transcription factor activity, RNA polymerase II-specific"/>
    <property type="evidence" value="ECO:0007669"/>
    <property type="project" value="InterPro"/>
</dbReference>
<dbReference type="CDD" id="cd00086">
    <property type="entry name" value="homeodomain"/>
    <property type="match status" value="1"/>
</dbReference>
<dbReference type="Gene3D" id="1.10.10.60">
    <property type="entry name" value="Homeodomain-like"/>
    <property type="match status" value="1"/>
</dbReference>
<dbReference type="InterPro" id="IPR001356">
    <property type="entry name" value="HD"/>
</dbReference>
<dbReference type="InterPro" id="IPR017970">
    <property type="entry name" value="Homeobox_CS"/>
</dbReference>
<dbReference type="InterPro" id="IPR050848">
    <property type="entry name" value="Homeobox_TF"/>
</dbReference>
<dbReference type="InterPro" id="IPR009057">
    <property type="entry name" value="Homeodomain-like_sf"/>
</dbReference>
<dbReference type="PANTHER" id="PTHR24333">
    <property type="entry name" value="HOMEO BOX HB9 LIKE A-RELATED"/>
    <property type="match status" value="1"/>
</dbReference>
<dbReference type="PANTHER" id="PTHR24333:SF5">
    <property type="entry name" value="VENT HOMEOBOX"/>
    <property type="match status" value="1"/>
</dbReference>
<dbReference type="Pfam" id="PF00046">
    <property type="entry name" value="Homeodomain"/>
    <property type="match status" value="1"/>
</dbReference>
<dbReference type="SMART" id="SM00389">
    <property type="entry name" value="HOX"/>
    <property type="match status" value="1"/>
</dbReference>
<dbReference type="SUPFAM" id="SSF46689">
    <property type="entry name" value="Homeodomain-like"/>
    <property type="match status" value="1"/>
</dbReference>
<dbReference type="PROSITE" id="PS00027">
    <property type="entry name" value="HOMEOBOX_1"/>
    <property type="match status" value="1"/>
</dbReference>
<dbReference type="PROSITE" id="PS50071">
    <property type="entry name" value="HOMEOBOX_2"/>
    <property type="match status" value="1"/>
</dbReference>
<name>SMOX5_SCHMA</name>
<organism>
    <name type="scientific">Schistosoma mansoni</name>
    <name type="common">Blood fluke</name>
    <dbReference type="NCBI Taxonomy" id="6183"/>
    <lineage>
        <taxon>Eukaryota</taxon>
        <taxon>Metazoa</taxon>
        <taxon>Spiralia</taxon>
        <taxon>Lophotrochozoa</taxon>
        <taxon>Platyhelminthes</taxon>
        <taxon>Trematoda</taxon>
        <taxon>Digenea</taxon>
        <taxon>Strigeidida</taxon>
        <taxon>Schistosomatoidea</taxon>
        <taxon>Schistosomatidae</taxon>
        <taxon>Schistosoma</taxon>
    </lineage>
</organism>
<feature type="chain" id="PRO_0000049313" description="Homeobox protein SMOX-5">
    <location>
        <begin position="1"/>
        <end position="284"/>
    </location>
</feature>
<feature type="DNA-binding region" description="Homeobox" evidence="1">
    <location>
        <begin position="37"/>
        <end position="96"/>
    </location>
</feature>
<feature type="region of interest" description="Disordered" evidence="2">
    <location>
        <begin position="117"/>
        <end position="172"/>
    </location>
</feature>
<feature type="compositionally biased region" description="Acidic residues" evidence="2">
    <location>
        <begin position="128"/>
        <end position="156"/>
    </location>
</feature>
<evidence type="ECO:0000255" key="1">
    <source>
        <dbReference type="PROSITE-ProRule" id="PRU00108"/>
    </source>
</evidence>
<evidence type="ECO:0000256" key="2">
    <source>
        <dbReference type="SAM" id="MobiDB-lite"/>
    </source>
</evidence>
<evidence type="ECO:0000305" key="3"/>
<protein>
    <recommendedName>
        <fullName>Homeobox protein SMOX-5</fullName>
    </recommendedName>
</protein>
<keyword id="KW-0238">DNA-binding</keyword>
<keyword id="KW-0371">Homeobox</keyword>
<keyword id="KW-0539">Nucleus</keyword>
<keyword id="KW-1185">Reference proteome</keyword>
<accession>Q26604</accession>
<reference key="1">
    <citation type="journal article" date="1992" name="Mech. Dev.">
        <title>Conserved classes of homeodomains in Schistosoma mansoni, an early bilateral metazoan.</title>
        <authorList>
            <person name="Webster P.J."/>
            <person name="Mansour T.E."/>
        </authorList>
    </citation>
    <scope>NUCLEOTIDE SEQUENCE [MRNA]</scope>
    <source>
        <strain>Puerto Rican</strain>
    </source>
</reference>
<sequence>MTTSTMQQLKHDGDFSDELNETSTIQFYNKVSQQRKRRKTRTTFSNCQLNELENNFNRQRYLTPTDRDRIAKHLGLTNTQVITWFQNRRAKLKREAEELERDVMALRKQKQQKFTCLSLSDHDHEETQIDDENEQGDNNNDDDGDDNDVEEDDGEEQEKNHTKYLTQPPSISNILPSSLKHFPSSTLNTLEIDNKHETLNMNLFINPFSNEKCLKRNKDLIRQQCYLFNHHINNYCTVNNDNNINNNNNNNNRKNSIDGMNKGRSIKKGNKIWCPALELEQEIH</sequence>
<gene>
    <name type="primary">SMOX-5</name>
</gene>
<comment type="subcellular location">
    <subcellularLocation>
        <location evidence="3">Nucleus</location>
    </subcellularLocation>
</comment>